<organism>
    <name type="scientific">Toxoplasma gondii</name>
    <dbReference type="NCBI Taxonomy" id="5811"/>
    <lineage>
        <taxon>Eukaryota</taxon>
        <taxon>Sar</taxon>
        <taxon>Alveolata</taxon>
        <taxon>Apicomplexa</taxon>
        <taxon>Conoidasida</taxon>
        <taxon>Coccidia</taxon>
        <taxon>Eucoccidiorida</taxon>
        <taxon>Eimeriorina</taxon>
        <taxon>Sarcocystidae</taxon>
        <taxon>Toxoplasma</taxon>
    </lineage>
</organism>
<evidence type="ECO:0000250" key="1"/>
<evidence type="ECO:0000255" key="2"/>
<evidence type="ECO:0000255" key="3">
    <source>
        <dbReference type="PROSITE-ProRule" id="PRU00782"/>
    </source>
</evidence>
<evidence type="ECO:0000269" key="4">
    <source>
    </source>
</evidence>
<evidence type="ECO:0000305" key="5"/>
<evidence type="ECO:0007829" key="6">
    <source>
        <dbReference type="PDB" id="5VT9"/>
    </source>
</evidence>
<comment type="function">
    <text evidence="1">Myosins are actin-based motor molecules with ATPase activity. Unconventional myosins serve in intracellular movements. Their highly divergent tails are presumed to bind to membranous compartments, which would be moved relative to actin filaments (By similarity).</text>
</comment>
<comment type="subcellular location">
    <subcellularLocation>
        <location evidence="4">Cell membrane</location>
        <topology evidence="4">Peripheral membrane protein</topology>
        <orientation evidence="4">Cytoplasmic side</orientation>
    </subcellularLocation>
    <text>Tightly associated with the plasma membrane.</text>
</comment>
<comment type="domain">
    <text>This protein differs from the typical myosin heavy chain structure in having head and tail domains but no discernible neck domain.</text>
</comment>
<comment type="similarity">
    <text evidence="5">Belongs to the TRAFAC class myosin-kinesin ATPase superfamily. Myosin family.</text>
</comment>
<keyword id="KW-0002">3D-structure</keyword>
<keyword id="KW-0009">Actin-binding</keyword>
<keyword id="KW-0067">ATP-binding</keyword>
<keyword id="KW-1003">Cell membrane</keyword>
<keyword id="KW-0472">Membrane</keyword>
<keyword id="KW-0505">Motor protein</keyword>
<keyword id="KW-0518">Myosin</keyword>
<keyword id="KW-0547">Nucleotide-binding</keyword>
<feature type="chain" id="PRO_0000123377" description="Myosin-A">
    <location>
        <begin position="1"/>
        <end position="831"/>
    </location>
</feature>
<feature type="domain" description="Myosin motor" evidence="3">
    <location>
        <begin position="99"/>
        <end position="773"/>
    </location>
</feature>
<feature type="region of interest" description="Actin-binding" evidence="2">
    <location>
        <begin position="663"/>
        <end position="673"/>
    </location>
</feature>
<feature type="region of interest" description="Tail">
    <location>
        <begin position="775"/>
        <end position="831"/>
    </location>
</feature>
<feature type="binding site" evidence="1">
    <location>
        <begin position="193"/>
        <end position="200"/>
    </location>
    <ligand>
        <name>ATP</name>
        <dbReference type="ChEBI" id="CHEBI:30616"/>
    </ligand>
</feature>
<feature type="mutagenesis site" description="Complete loss of membrane localization." evidence="4">
    <original>RR</original>
    <variation>AA</variation>
    <location>
        <begin position="814"/>
        <end position="815"/>
    </location>
</feature>
<feature type="helix" evidence="6">
    <location>
        <begin position="803"/>
        <end position="816"/>
    </location>
</feature>
<feature type="helix" evidence="6">
    <location>
        <begin position="818"/>
        <end position="820"/>
    </location>
</feature>
<reference evidence="5" key="1">
    <citation type="journal article" date="1997" name="J. Mol. Biol.">
        <title>A novel class of unconventional myosins from Toxoplasma gondii.</title>
        <authorList>
            <person name="Heintzelman M.B."/>
            <person name="Schwartzman J.D."/>
        </authorList>
    </citation>
    <scope>NUCLEOTIDE SEQUENCE [MRNA]</scope>
</reference>
<reference evidence="5" key="2">
    <citation type="journal article" date="2000" name="Mol. Biol. Cell">
        <title>A dibasic motif in the tail of a class XIV apicomplexan myosin is an essential determinant of plasma membrane localization.</title>
        <authorList>
            <person name="Hettmann C."/>
            <person name="Herm A."/>
            <person name="Geiter A."/>
            <person name="Frank B."/>
            <person name="Schwarz E."/>
            <person name="Soldati T."/>
            <person name="Soldati D."/>
        </authorList>
    </citation>
    <scope>SUBCELLULAR LOCATION</scope>
    <scope>MUTAGENESIS OF 814-ARG-ARG-815</scope>
</reference>
<name>MYOA_TOXGO</name>
<dbReference type="EMBL" id="AF006626">
    <property type="protein sequence ID" value="AAC47724.1"/>
    <property type="molecule type" value="mRNA"/>
</dbReference>
<dbReference type="PIR" id="A59283">
    <property type="entry name" value="A59283"/>
</dbReference>
<dbReference type="PDB" id="5VT9">
    <property type="method" value="X-ray"/>
    <property type="resolution" value="1.85 A"/>
    <property type="chains" value="C/D=801-831"/>
</dbReference>
<dbReference type="PDB" id="6TJ5">
    <property type="method" value="X-ray"/>
    <property type="resolution" value="2.39 A"/>
    <property type="chains" value="C=777-818"/>
</dbReference>
<dbReference type="PDB" id="6TJ6">
    <property type="method" value="X-ray"/>
    <property type="resolution" value="2.00 A"/>
    <property type="chains" value="C=777-818"/>
</dbReference>
<dbReference type="PDB" id="6TJ7">
    <property type="method" value="X-ray"/>
    <property type="resolution" value="2.30 A"/>
    <property type="chains" value="C=777-818"/>
</dbReference>
<dbReference type="PDBsum" id="5VT9"/>
<dbReference type="PDBsum" id="6TJ5"/>
<dbReference type="PDBsum" id="6TJ6"/>
<dbReference type="PDBsum" id="6TJ7"/>
<dbReference type="SMR" id="O00934"/>
<dbReference type="SwissPalm" id="O00934"/>
<dbReference type="VEuPathDB" id="ToxoDB:TGARI_235470A"/>
<dbReference type="VEuPathDB" id="ToxoDB:TGARI_235470B"/>
<dbReference type="VEuPathDB" id="ToxoDB:TGCAST_235470A"/>
<dbReference type="VEuPathDB" id="ToxoDB:TGCAST_235470B"/>
<dbReference type="VEuPathDB" id="ToxoDB:TGCOUG_235470"/>
<dbReference type="VEuPathDB" id="ToxoDB:TGDOM2_235470"/>
<dbReference type="VEuPathDB" id="ToxoDB:TGFOU_235470A"/>
<dbReference type="VEuPathDB" id="ToxoDB:TGFOU_235470B"/>
<dbReference type="VEuPathDB" id="ToxoDB:TGFOU_235470C"/>
<dbReference type="VEuPathDB" id="ToxoDB:TGGT1_235470"/>
<dbReference type="VEuPathDB" id="ToxoDB:TGMAS_235470A"/>
<dbReference type="VEuPathDB" id="ToxoDB:TGMAS_235470B"/>
<dbReference type="VEuPathDB" id="ToxoDB:TGME49_235470"/>
<dbReference type="VEuPathDB" id="ToxoDB:TGP89_235470A"/>
<dbReference type="VEuPathDB" id="ToxoDB:TGP89_235470B"/>
<dbReference type="VEuPathDB" id="ToxoDB:TGPRC2_235470A"/>
<dbReference type="VEuPathDB" id="ToxoDB:TGPRC2_235470B"/>
<dbReference type="VEuPathDB" id="ToxoDB:TGRH88_041990"/>
<dbReference type="VEuPathDB" id="ToxoDB:TGRUB_235470"/>
<dbReference type="VEuPathDB" id="ToxoDB:TGVAND_235470A"/>
<dbReference type="VEuPathDB" id="ToxoDB:TGVAND_235470B"/>
<dbReference type="VEuPathDB" id="ToxoDB:TGVEG_235470"/>
<dbReference type="GO" id="GO:0005737">
    <property type="term" value="C:cytoplasm"/>
    <property type="evidence" value="ECO:0007669"/>
    <property type="project" value="TreeGrafter"/>
</dbReference>
<dbReference type="GO" id="GO:0016459">
    <property type="term" value="C:myosin complex"/>
    <property type="evidence" value="ECO:0007669"/>
    <property type="project" value="UniProtKB-KW"/>
</dbReference>
<dbReference type="GO" id="GO:0005886">
    <property type="term" value="C:plasma membrane"/>
    <property type="evidence" value="ECO:0007669"/>
    <property type="project" value="UniProtKB-SubCell"/>
</dbReference>
<dbReference type="GO" id="GO:0051015">
    <property type="term" value="F:actin filament binding"/>
    <property type="evidence" value="ECO:0007669"/>
    <property type="project" value="TreeGrafter"/>
</dbReference>
<dbReference type="GO" id="GO:0005524">
    <property type="term" value="F:ATP binding"/>
    <property type="evidence" value="ECO:0007669"/>
    <property type="project" value="UniProtKB-KW"/>
</dbReference>
<dbReference type="GO" id="GO:0000146">
    <property type="term" value="F:microfilament motor activity"/>
    <property type="evidence" value="ECO:0007669"/>
    <property type="project" value="TreeGrafter"/>
</dbReference>
<dbReference type="GO" id="GO:0007015">
    <property type="term" value="P:actin filament organization"/>
    <property type="evidence" value="ECO:0007669"/>
    <property type="project" value="TreeGrafter"/>
</dbReference>
<dbReference type="CDD" id="cd14876">
    <property type="entry name" value="MYSc_Myo14"/>
    <property type="match status" value="1"/>
</dbReference>
<dbReference type="FunFam" id="1.10.10.820:FF:000001">
    <property type="entry name" value="Myosin heavy chain"/>
    <property type="match status" value="1"/>
</dbReference>
<dbReference type="Gene3D" id="1.10.10.820">
    <property type="match status" value="1"/>
</dbReference>
<dbReference type="Gene3D" id="1.20.5.4820">
    <property type="match status" value="1"/>
</dbReference>
<dbReference type="Gene3D" id="1.20.58.530">
    <property type="match status" value="1"/>
</dbReference>
<dbReference type="Gene3D" id="3.40.850.10">
    <property type="entry name" value="Kinesin motor domain"/>
    <property type="match status" value="1"/>
</dbReference>
<dbReference type="Gene3D" id="1.20.120.720">
    <property type="entry name" value="Myosin VI head, motor domain, U50 subdomain"/>
    <property type="match status" value="1"/>
</dbReference>
<dbReference type="InterPro" id="IPR036961">
    <property type="entry name" value="Kinesin_motor_dom_sf"/>
</dbReference>
<dbReference type="InterPro" id="IPR001609">
    <property type="entry name" value="Myosin_head_motor_dom-like"/>
</dbReference>
<dbReference type="InterPro" id="IPR036044">
    <property type="entry name" value="MYSc_Myo14"/>
</dbReference>
<dbReference type="InterPro" id="IPR027417">
    <property type="entry name" value="P-loop_NTPase"/>
</dbReference>
<dbReference type="PANTHER" id="PTHR13140">
    <property type="entry name" value="MYOSIN"/>
    <property type="match status" value="1"/>
</dbReference>
<dbReference type="PANTHER" id="PTHR13140:SF270">
    <property type="entry name" value="MYOSIN-12"/>
    <property type="match status" value="1"/>
</dbReference>
<dbReference type="Pfam" id="PF00063">
    <property type="entry name" value="Myosin_head"/>
    <property type="match status" value="1"/>
</dbReference>
<dbReference type="PRINTS" id="PR00193">
    <property type="entry name" value="MYOSINHEAVY"/>
</dbReference>
<dbReference type="SMART" id="SM00242">
    <property type="entry name" value="MYSc"/>
    <property type="match status" value="1"/>
</dbReference>
<dbReference type="SUPFAM" id="SSF52540">
    <property type="entry name" value="P-loop containing nucleoside triphosphate hydrolases"/>
    <property type="match status" value="1"/>
</dbReference>
<dbReference type="PROSITE" id="PS51456">
    <property type="entry name" value="MYOSIN_MOTOR"/>
    <property type="match status" value="1"/>
</dbReference>
<sequence>MASKTTSEELKTATALKKRSSDVHAVDHSGNVYKGFQIWTDLAPSVKEEPDLMFAKCIVQAGTDKGNLTCVQIDPPGFDEPFEVPQANAWNVNSLIDPMTYGDIGMLPHTNIPCVLDFLKVRFMKNQIYTTADPLVVAINPFRDLGNTTLDWIVRYRDTFDLSKLAPHVFYTARRALDNLHAVNKSQTIIVSGESGAGKTEATKQIMRYFAAAKTGSMDLRIQNAIMAANPVLEAFGNAKTIRNNNSSRFGRFMQLDVGREGGIKFGSVVAFLLEKSRVLTQDEQERSYHIFYQMCKGADAAMKERFHILPLSEYKYINPLCLDAPGIDDVAEFHEVCESFRSMNLTEDEVASVWSIVSGVLLLGNVEVTATKDGGIDDAAAIEGKNLEVFKKACGLLFLDAERIREELTVKVSYAGNQEIRGRWKQEDGDMLKSSLAKAMYDKLFMWIIAVLNRSIKPPGGFKIFMGMLDIFGFEVFKNNSLEQFFINITNEMLQKNFVDIVFDRESKLYRDEGVSSKELIFTSNAEVIKILTAKNNSVLAALEDQCLAPGGSDEKFLSTCKNALKGTTKFKPAKVSPNINFLISHTVGDIQYNAEGFLFKNKDVLRAEIMEIVQQSKNPVVAQLFAGIVMEKGKMAKGQLIGSQFLSQLQSLMELINSTEPHFIRCIKPNDTKKPLDWVPSKMLIQLHALSVLEALQLRQLGYSYRRPFKEFLFQFKFIDLSASENPNLDPKEAALRLLKSSKLPSEEYQLGKTMVFLKQTGAKELTQIQRECLSSWEPLVSVLEAYYAGRRHKKQLLKKTPFIIRAQAHIRRHLVDNNVSPATVQPAF</sequence>
<proteinExistence type="evidence at protein level"/>
<protein>
    <recommendedName>
        <fullName>Myosin-A</fullName>
        <shortName>MyoA</shortName>
    </recommendedName>
    <alternativeName>
        <fullName>TgM-A</fullName>
    </alternativeName>
</protein>
<accession>O00934</accession>